<feature type="signal peptide" evidence="3">
    <location>
        <begin position="1"/>
        <end position="31"/>
    </location>
</feature>
<feature type="chain" id="PRO_0000012919" description="Cadherin EGF LAG seven-pass G-type receptor 3">
    <location>
        <begin position="32"/>
        <end position="3301"/>
    </location>
</feature>
<feature type="topological domain" description="Extracellular" evidence="3">
    <location>
        <begin position="32"/>
        <end position="2531"/>
    </location>
</feature>
<feature type="transmembrane region" description="Helical; Name=1" evidence="3">
    <location>
        <begin position="2532"/>
        <end position="2552"/>
    </location>
</feature>
<feature type="topological domain" description="Cytoplasmic" evidence="3">
    <location>
        <begin position="2553"/>
        <end position="2563"/>
    </location>
</feature>
<feature type="transmembrane region" description="Helical; Name=2" evidence="3">
    <location>
        <begin position="2564"/>
        <end position="2584"/>
    </location>
</feature>
<feature type="topological domain" description="Extracellular" evidence="3">
    <location>
        <begin position="2585"/>
        <end position="2592"/>
    </location>
</feature>
<feature type="transmembrane region" description="Helical; Name=3" evidence="3">
    <location>
        <begin position="2593"/>
        <end position="2613"/>
    </location>
</feature>
<feature type="topological domain" description="Cytoplasmic" evidence="3">
    <location>
        <begin position="2614"/>
        <end position="2634"/>
    </location>
</feature>
<feature type="transmembrane region" description="Helical; Name=4" evidence="3">
    <location>
        <begin position="2635"/>
        <end position="2655"/>
    </location>
</feature>
<feature type="topological domain" description="Extracellular" evidence="3">
    <location>
        <begin position="2656"/>
        <end position="2673"/>
    </location>
</feature>
<feature type="transmembrane region" description="Helical; Name=5" evidence="3">
    <location>
        <begin position="2674"/>
        <end position="2694"/>
    </location>
</feature>
<feature type="topological domain" description="Cytoplasmic" evidence="3">
    <location>
        <begin position="2695"/>
        <end position="2716"/>
    </location>
</feature>
<feature type="transmembrane region" description="Helical; Name=6" evidence="3">
    <location>
        <begin position="2717"/>
        <end position="2737"/>
    </location>
</feature>
<feature type="topological domain" description="Extracellular" evidence="3">
    <location>
        <begin position="2738"/>
        <end position="2744"/>
    </location>
</feature>
<feature type="transmembrane region" description="Helical; Name=7" evidence="3">
    <location>
        <begin position="2745"/>
        <end position="2765"/>
    </location>
</feature>
<feature type="topological domain" description="Cytoplasmic" evidence="3">
    <location>
        <begin position="2766"/>
        <end position="3301"/>
    </location>
</feature>
<feature type="domain" description="Cadherin 1" evidence="4">
    <location>
        <begin position="317"/>
        <end position="424"/>
    </location>
</feature>
<feature type="domain" description="Cadherin 2" evidence="4">
    <location>
        <begin position="425"/>
        <end position="536"/>
    </location>
</feature>
<feature type="domain" description="Cadherin 3" evidence="4">
    <location>
        <begin position="537"/>
        <end position="642"/>
    </location>
</feature>
<feature type="domain" description="Cadherin 4" evidence="4">
    <location>
        <begin position="643"/>
        <end position="747"/>
    </location>
</feature>
<feature type="domain" description="Cadherin 5" evidence="4">
    <location>
        <begin position="748"/>
        <end position="849"/>
    </location>
</feature>
<feature type="domain" description="Cadherin 6" evidence="4">
    <location>
        <begin position="850"/>
        <end position="952"/>
    </location>
</feature>
<feature type="domain" description="Cadherin 7" evidence="4">
    <location>
        <begin position="953"/>
        <end position="1058"/>
    </location>
</feature>
<feature type="domain" description="Cadherin 8" evidence="4">
    <location>
        <begin position="1059"/>
        <end position="1160"/>
    </location>
</feature>
<feature type="domain" description="Cadherin 9" evidence="4">
    <location>
        <begin position="1161"/>
        <end position="1257"/>
    </location>
</feature>
<feature type="domain" description="EGF-like 1; calcium-binding" evidence="5">
    <location>
        <begin position="1366"/>
        <end position="1424"/>
    </location>
</feature>
<feature type="domain" description="EGF-like 2; calcium-binding" evidence="5">
    <location>
        <begin position="1426"/>
        <end position="1460"/>
    </location>
</feature>
<feature type="domain" description="EGF-like 3; calcium-binding" evidence="5">
    <location>
        <begin position="1464"/>
        <end position="1503"/>
    </location>
</feature>
<feature type="domain" description="Laminin G-like 1" evidence="7">
    <location>
        <begin position="1504"/>
        <end position="1708"/>
    </location>
</feature>
<feature type="domain" description="EGF-like 4; calcium-binding" evidence="5">
    <location>
        <begin position="1711"/>
        <end position="1747"/>
    </location>
</feature>
<feature type="domain" description="Laminin G-like 2" evidence="7">
    <location>
        <begin position="1751"/>
        <end position="1933"/>
    </location>
</feature>
<feature type="domain" description="EGF-like 5; calcium-binding" evidence="5">
    <location>
        <begin position="1935"/>
        <end position="1971"/>
    </location>
</feature>
<feature type="domain" description="EGF-like 6; calcium-binding" evidence="5">
    <location>
        <begin position="1972"/>
        <end position="2002"/>
    </location>
</feature>
<feature type="domain" description="EGF-like 7; calcium-binding" evidence="5">
    <location>
        <begin position="2003"/>
        <end position="2042"/>
    </location>
</feature>
<feature type="domain" description="EGF-like 8; calcium-binding" evidence="5">
    <location>
        <begin position="2044"/>
        <end position="2079"/>
    </location>
</feature>
<feature type="domain" description="Laminin EGF-like" evidence="8">
    <location>
        <begin position="2066"/>
        <end position="2113"/>
    </location>
</feature>
<feature type="domain" description="GAIN-B" evidence="6">
    <location>
        <begin position="2357"/>
        <end position="2521"/>
    </location>
</feature>
<feature type="region of interest" description="Disordered" evidence="9">
    <location>
        <begin position="148"/>
        <end position="189"/>
    </location>
</feature>
<feature type="region of interest" description="Disordered" evidence="9">
    <location>
        <begin position="202"/>
        <end position="314"/>
    </location>
</feature>
<feature type="region of interest" description="Disordered" evidence="9">
    <location>
        <begin position="2353"/>
        <end position="2388"/>
    </location>
</feature>
<feature type="region of interest" description="GPS" evidence="6">
    <location>
        <begin position="2471"/>
        <end position="2521"/>
    </location>
</feature>
<feature type="region of interest" description="Disordered" evidence="9">
    <location>
        <begin position="2823"/>
        <end position="2844"/>
    </location>
</feature>
<feature type="region of interest" description="Disordered" evidence="9">
    <location>
        <begin position="2879"/>
        <end position="2919"/>
    </location>
</feature>
<feature type="region of interest" description="Disordered" evidence="9">
    <location>
        <begin position="2969"/>
        <end position="2992"/>
    </location>
</feature>
<feature type="region of interest" description="Disordered" evidence="9">
    <location>
        <begin position="3083"/>
        <end position="3301"/>
    </location>
</feature>
<feature type="compositionally biased region" description="Basic residues" evidence="9">
    <location>
        <begin position="267"/>
        <end position="276"/>
    </location>
</feature>
<feature type="compositionally biased region" description="Low complexity" evidence="9">
    <location>
        <begin position="2355"/>
        <end position="2383"/>
    </location>
</feature>
<feature type="compositionally biased region" description="Acidic residues" evidence="9">
    <location>
        <begin position="2881"/>
        <end position="2891"/>
    </location>
</feature>
<feature type="compositionally biased region" description="Basic residues" evidence="9">
    <location>
        <begin position="2910"/>
        <end position="2919"/>
    </location>
</feature>
<feature type="compositionally biased region" description="Basic and acidic residues" evidence="9">
    <location>
        <begin position="3094"/>
        <end position="3111"/>
    </location>
</feature>
<feature type="compositionally biased region" description="Low complexity" evidence="9">
    <location>
        <begin position="3168"/>
        <end position="3189"/>
    </location>
</feature>
<feature type="compositionally biased region" description="Low complexity" evidence="9">
    <location>
        <begin position="3239"/>
        <end position="3261"/>
    </location>
</feature>
<feature type="compositionally biased region" description="Polar residues" evidence="9">
    <location>
        <begin position="3276"/>
        <end position="3289"/>
    </location>
</feature>
<feature type="modified residue" description="(3R)-3-hydroxyaspartate" evidence="3">
    <location>
        <position position="1952"/>
    </location>
</feature>
<feature type="modified residue" description="Phosphotyrosine" evidence="2">
    <location>
        <position position="2115"/>
    </location>
</feature>
<feature type="modified residue" description="Phosphotyrosine" evidence="2">
    <location>
        <position position="3042"/>
    </location>
</feature>
<feature type="modified residue" description="Phosphoserine" evidence="2">
    <location>
        <position position="3090"/>
    </location>
</feature>
<feature type="glycosylation site" description="N-linked (GlcNAc...) asparagine" evidence="3">
    <location>
        <position position="623"/>
    </location>
</feature>
<feature type="glycosylation site" description="N-linked (GlcNAc...) asparagine" evidence="3">
    <location>
        <position position="838"/>
    </location>
</feature>
<feature type="glycosylation site" description="N-linked (GlcNAc...) asparagine" evidence="3">
    <location>
        <position position="1173"/>
    </location>
</feature>
<feature type="glycosylation site" description="N-linked (GlcNAc...) asparagine" evidence="3">
    <location>
        <position position="1213"/>
    </location>
</feature>
<feature type="glycosylation site" description="N-linked (GlcNAc...) asparagine" evidence="3">
    <location>
        <position position="1308"/>
    </location>
</feature>
<feature type="glycosylation site" description="N-linked (GlcNAc...) asparagine" evidence="3">
    <location>
        <position position="1318"/>
    </location>
</feature>
<feature type="glycosylation site" description="N-linked (GlcNAc...) asparagine" evidence="3">
    <location>
        <position position="1638"/>
    </location>
</feature>
<feature type="glycosylation site" description="N-linked (GlcNAc...) asparagine" evidence="3">
    <location>
        <position position="1702"/>
    </location>
</feature>
<feature type="glycosylation site" description="N-linked (GlcNAc...) asparagine" evidence="3">
    <location>
        <position position="1759"/>
    </location>
</feature>
<feature type="glycosylation site" description="N-linked (GlcNAc...) asparagine" evidence="3">
    <location>
        <position position="2042"/>
    </location>
</feature>
<feature type="glycosylation site" description="N-linked (GlcNAc...) asparagine" evidence="3">
    <location>
        <position position="2166"/>
    </location>
</feature>
<feature type="glycosylation site" description="N-linked (GlcNAc...) asparagine" evidence="3">
    <location>
        <position position="2185"/>
    </location>
</feature>
<feature type="glycosylation site" description="N-linked (GlcNAc...) asparagine" evidence="3">
    <location>
        <position position="2375"/>
    </location>
</feature>
<feature type="glycosylation site" description="N-linked (GlcNAc...) asparagine" evidence="3">
    <location>
        <position position="2465"/>
    </location>
</feature>
<feature type="glycosylation site" description="N-linked (GlcNAc...) asparagine" evidence="3">
    <location>
        <position position="2497"/>
    </location>
</feature>
<feature type="disulfide bond" evidence="1">
    <location>
        <begin position="1370"/>
        <end position="1381"/>
    </location>
</feature>
<feature type="disulfide bond" evidence="1">
    <location>
        <begin position="1375"/>
        <end position="1412"/>
    </location>
</feature>
<feature type="disulfide bond" evidence="1">
    <location>
        <begin position="1414"/>
        <end position="1423"/>
    </location>
</feature>
<feature type="disulfide bond" evidence="1">
    <location>
        <begin position="1430"/>
        <end position="1441"/>
    </location>
</feature>
<feature type="disulfide bond" evidence="1">
    <location>
        <begin position="1435"/>
        <end position="1450"/>
    </location>
</feature>
<feature type="disulfide bond" evidence="1">
    <location>
        <begin position="1452"/>
        <end position="1459"/>
    </location>
</feature>
<feature type="disulfide bond" evidence="1">
    <location>
        <begin position="1468"/>
        <end position="1479"/>
    </location>
</feature>
<feature type="disulfide bond" evidence="1">
    <location>
        <begin position="1473"/>
        <end position="1489"/>
    </location>
</feature>
<feature type="disulfide bond" evidence="1">
    <location>
        <begin position="1491"/>
        <end position="1502"/>
    </location>
</feature>
<feature type="disulfide bond" evidence="1">
    <location>
        <begin position="1682"/>
        <end position="1708"/>
    </location>
</feature>
<feature type="disulfide bond" evidence="1">
    <location>
        <begin position="1715"/>
        <end position="1726"/>
    </location>
</feature>
<feature type="disulfide bond" evidence="1">
    <location>
        <begin position="1720"/>
        <end position="1735"/>
    </location>
</feature>
<feature type="disulfide bond" evidence="1">
    <location>
        <begin position="1737"/>
        <end position="1746"/>
    </location>
</feature>
<feature type="disulfide bond" evidence="1">
    <location>
        <begin position="1904"/>
        <end position="1933"/>
    </location>
</feature>
<feature type="disulfide bond" evidence="1">
    <location>
        <begin position="1939"/>
        <end position="1950"/>
    </location>
</feature>
<feature type="disulfide bond" evidence="1">
    <location>
        <begin position="1944"/>
        <end position="1959"/>
    </location>
</feature>
<feature type="disulfide bond" evidence="1">
    <location>
        <begin position="1961"/>
        <end position="1970"/>
    </location>
</feature>
<feature type="disulfide bond" evidence="1">
    <location>
        <begin position="1974"/>
        <end position="1985"/>
    </location>
</feature>
<feature type="disulfide bond" evidence="1">
    <location>
        <begin position="1979"/>
        <end position="1997"/>
    </location>
</feature>
<feature type="disulfide bond" evidence="1">
    <location>
        <begin position="1999"/>
        <end position="2008"/>
    </location>
</feature>
<feature type="disulfide bond" evidence="1">
    <location>
        <begin position="2016"/>
        <end position="2029"/>
    </location>
</feature>
<feature type="disulfide bond" evidence="1">
    <location>
        <begin position="2031"/>
        <end position="2041"/>
    </location>
</feature>
<feature type="disulfide bond" evidence="1">
    <location>
        <begin position="2048"/>
        <end position="2063"/>
    </location>
</feature>
<feature type="disulfide bond" evidence="1">
    <location>
        <begin position="2050"/>
        <end position="2066"/>
    </location>
</feature>
<feature type="disulfide bond" evidence="1">
    <location>
        <begin position="2068"/>
        <end position="2078"/>
    </location>
</feature>
<feature type="disulfide bond" evidence="1">
    <location>
        <begin position="2087"/>
        <end position="2096"/>
    </location>
</feature>
<feature type="disulfide bond" evidence="1">
    <location>
        <begin position="2099"/>
        <end position="2111"/>
    </location>
</feature>
<feature type="disulfide bond" evidence="6">
    <location>
        <begin position="2471"/>
        <end position="2503"/>
    </location>
</feature>
<feature type="disulfide bond" evidence="6">
    <location>
        <begin position="2491"/>
        <end position="2505"/>
    </location>
</feature>
<feature type="sequence conflict" description="In Ref. 1; AAL25099." evidence="13" ref="1">
    <original>D</original>
    <variation>E</variation>
    <location>
        <position position="221"/>
    </location>
</feature>
<feature type="sequence conflict" description="In Ref. 1; AAL25099." evidence="13" ref="1">
    <original>S</original>
    <variation>G</variation>
    <location>
        <position position="537"/>
    </location>
</feature>
<feature type="sequence conflict" description="In Ref. 3; AAG17057." evidence="13" ref="3">
    <original>L</original>
    <variation>LR</variation>
    <location>
        <position position="2713"/>
    </location>
</feature>
<feature type="sequence conflict" description="In Ref. 3; AAG17057." evidence="13" ref="3">
    <original>R</original>
    <variation>P</variation>
    <location>
        <position position="3024"/>
    </location>
</feature>
<proteinExistence type="evidence at transcript level"/>
<comment type="function">
    <text>Receptor that may have an important role in cell/cell signaling during nervous system formation.</text>
</comment>
<comment type="subcellular location">
    <subcellularLocation>
        <location>Cell membrane</location>
        <topology>Multi-pass membrane protein</topology>
    </subcellularLocation>
</comment>
<comment type="tissue specificity">
    <text evidence="10">Expressed in the CNS and in the eye.</text>
</comment>
<comment type="developmental stage">
    <text evidence="11 12">Predominantly expressed in the CNS, the emerging dorsal root ganglia and cranial ganglia. In the CNS, expression is uniform along the rostrocaudal axis. No expression is detected until somite stages. Between 10 and 12 dpc, expression is strong in the marginal zone (MZ), and lower in the ventricular zone (VZ). At 15 dpc, expression is restricted to the brain and olfactory epithelium. In the brain, it is low in VZ but strong in external fields, particularly those with ongoing migration, such as the telencephalic cortical plate, the olfactory bulb, the cerebellum and the tectum. In the newborn and postnatal stages, expression is high in differentiated neuronal fields.</text>
</comment>
<comment type="similarity">
    <text evidence="13">Belongs to the G-protein coupled receptor 2 family. LN-TM7 subfamily.</text>
</comment>
<comment type="sequence caution" evidence="13">
    <conflict type="frameshift">
        <sequence resource="EMBL-CDS" id="AAG17057"/>
    </conflict>
</comment>
<dbReference type="EMBL" id="AF427498">
    <property type="protein sequence ID" value="AAL25099.1"/>
    <property type="molecule type" value="mRNA"/>
</dbReference>
<dbReference type="EMBL" id="AC168054">
    <property type="status" value="NOT_ANNOTATED_CDS"/>
    <property type="molecule type" value="Genomic_DNA"/>
</dbReference>
<dbReference type="EMBL" id="AF188752">
    <property type="protein sequence ID" value="AAG17057.1"/>
    <property type="status" value="ALT_FRAME"/>
    <property type="molecule type" value="mRNA"/>
</dbReference>
<dbReference type="RefSeq" id="NP_536685.2">
    <property type="nucleotide sequence ID" value="NM_080437.3"/>
</dbReference>
<dbReference type="SMR" id="Q91ZI0"/>
<dbReference type="BioGRID" id="223701">
    <property type="interactions" value="1"/>
</dbReference>
<dbReference type="FunCoup" id="Q91ZI0">
    <property type="interactions" value="502"/>
</dbReference>
<dbReference type="IntAct" id="Q91ZI0">
    <property type="interactions" value="1"/>
</dbReference>
<dbReference type="STRING" id="10090.ENSMUSP00000024238"/>
<dbReference type="GlyCosmos" id="Q91ZI0">
    <property type="glycosylation" value="15 sites, No reported glycans"/>
</dbReference>
<dbReference type="GlyGen" id="Q91ZI0">
    <property type="glycosylation" value="23 sites, 4 N-linked glycans (4 sites), 1 O-linked glycan (3 sites)"/>
</dbReference>
<dbReference type="iPTMnet" id="Q91ZI0"/>
<dbReference type="PhosphoSitePlus" id="Q91ZI0"/>
<dbReference type="PaxDb" id="10090-ENSMUSP00000024238"/>
<dbReference type="ProteomicsDB" id="281580"/>
<dbReference type="Pumba" id="Q91ZI0"/>
<dbReference type="Antibodypedia" id="13269">
    <property type="antibodies" value="309 antibodies from 33 providers"/>
</dbReference>
<dbReference type="DNASU" id="107934"/>
<dbReference type="Ensembl" id="ENSMUST00000024238.11">
    <property type="protein sequence ID" value="ENSMUSP00000024238.6"/>
    <property type="gene ID" value="ENSMUSG00000023473.14"/>
</dbReference>
<dbReference type="GeneID" id="107934"/>
<dbReference type="KEGG" id="mmu:107934"/>
<dbReference type="UCSC" id="uc009rrb.1">
    <property type="organism name" value="mouse"/>
</dbReference>
<dbReference type="AGR" id="MGI:1858236"/>
<dbReference type="CTD" id="1951"/>
<dbReference type="MGI" id="MGI:1858236">
    <property type="gene designation" value="Celsr3"/>
</dbReference>
<dbReference type="VEuPathDB" id="HostDB:ENSMUSG00000023473"/>
<dbReference type="eggNOG" id="KOG4289">
    <property type="taxonomic scope" value="Eukaryota"/>
</dbReference>
<dbReference type="GeneTree" id="ENSGT00940000160077"/>
<dbReference type="HOGENOM" id="CLU_000158_1_0_1"/>
<dbReference type="InParanoid" id="Q91ZI0"/>
<dbReference type="PhylomeDB" id="Q91ZI0"/>
<dbReference type="TreeFam" id="TF323983"/>
<dbReference type="BioGRID-ORCS" id="107934">
    <property type="hits" value="2 hits in 80 CRISPR screens"/>
</dbReference>
<dbReference type="PRO" id="PR:Q91ZI0"/>
<dbReference type="Proteomes" id="UP000000589">
    <property type="component" value="Chromosome 9"/>
</dbReference>
<dbReference type="RNAct" id="Q91ZI0">
    <property type="molecule type" value="protein"/>
</dbReference>
<dbReference type="Bgee" id="ENSMUSG00000023473">
    <property type="expression patterns" value="Expressed in cerebellar cortex and 112 other cell types or tissues"/>
</dbReference>
<dbReference type="ExpressionAtlas" id="Q91ZI0">
    <property type="expression patterns" value="baseline and differential"/>
</dbReference>
<dbReference type="GO" id="GO:0098978">
    <property type="term" value="C:glutamatergic synapse"/>
    <property type="evidence" value="ECO:0000314"/>
    <property type="project" value="SynGO"/>
</dbReference>
<dbReference type="GO" id="GO:0098839">
    <property type="term" value="C:postsynaptic density membrane"/>
    <property type="evidence" value="ECO:0000314"/>
    <property type="project" value="SynGO"/>
</dbReference>
<dbReference type="GO" id="GO:0048787">
    <property type="term" value="C:presynaptic active zone membrane"/>
    <property type="evidence" value="ECO:0000314"/>
    <property type="project" value="SynGO"/>
</dbReference>
<dbReference type="GO" id="GO:0005509">
    <property type="term" value="F:calcium ion binding"/>
    <property type="evidence" value="ECO:0007669"/>
    <property type="project" value="InterPro"/>
</dbReference>
<dbReference type="GO" id="GO:0004930">
    <property type="term" value="F:G protein-coupled receptor activity"/>
    <property type="evidence" value="ECO:0007669"/>
    <property type="project" value="UniProtKB-KW"/>
</dbReference>
<dbReference type="GO" id="GO:0007413">
    <property type="term" value="P:axonal fasciculation"/>
    <property type="evidence" value="ECO:0000315"/>
    <property type="project" value="MGI"/>
</dbReference>
<dbReference type="GO" id="GO:0060271">
    <property type="term" value="P:cilium assembly"/>
    <property type="evidence" value="ECO:0000316"/>
    <property type="project" value="MGI"/>
</dbReference>
<dbReference type="GO" id="GO:0036514">
    <property type="term" value="P:dopaminergic neuron axon guidance"/>
    <property type="evidence" value="ECO:0000315"/>
    <property type="project" value="ParkinsonsUK-UCL"/>
</dbReference>
<dbReference type="GO" id="GO:0007156">
    <property type="term" value="P:homophilic cell adhesion via plasma membrane adhesion molecules"/>
    <property type="evidence" value="ECO:0007669"/>
    <property type="project" value="InterPro"/>
</dbReference>
<dbReference type="GO" id="GO:0097475">
    <property type="term" value="P:motor neuron migration"/>
    <property type="evidence" value="ECO:0000315"/>
    <property type="project" value="MGI"/>
</dbReference>
<dbReference type="GO" id="GO:0032880">
    <property type="term" value="P:regulation of protein localization"/>
    <property type="evidence" value="ECO:0000316"/>
    <property type="project" value="MGI"/>
</dbReference>
<dbReference type="GO" id="GO:0036515">
    <property type="term" value="P:serotonergic neuron axon guidance"/>
    <property type="evidence" value="ECO:0000315"/>
    <property type="project" value="ParkinsonsUK-UCL"/>
</dbReference>
<dbReference type="GO" id="GO:0060071">
    <property type="term" value="P:Wnt signaling pathway, planar cell polarity pathway"/>
    <property type="evidence" value="ECO:0000315"/>
    <property type="project" value="ParkinsonsUK-UCL"/>
</dbReference>
<dbReference type="CDD" id="cd11304">
    <property type="entry name" value="Cadherin_repeat"/>
    <property type="match status" value="9"/>
</dbReference>
<dbReference type="CDD" id="cd00054">
    <property type="entry name" value="EGF_CA"/>
    <property type="match status" value="5"/>
</dbReference>
<dbReference type="CDD" id="cd00055">
    <property type="entry name" value="EGF_Lam"/>
    <property type="match status" value="2"/>
</dbReference>
<dbReference type="CDD" id="cd00110">
    <property type="entry name" value="LamG"/>
    <property type="match status" value="2"/>
</dbReference>
<dbReference type="FunFam" id="2.10.25.10:FF:000011">
    <property type="entry name" value="Cadherin EGF LAG seven-pass G-type receptor"/>
    <property type="match status" value="1"/>
</dbReference>
<dbReference type="FunFam" id="2.60.40.60:FF:000013">
    <property type="entry name" value="Cadherin EGF LAG seven-pass G-type receptor"/>
    <property type="match status" value="1"/>
</dbReference>
<dbReference type="FunFam" id="1.20.1070.10:FF:000108">
    <property type="entry name" value="Cadherin EGF LAG seven-pass G-type receptor 3"/>
    <property type="match status" value="1"/>
</dbReference>
<dbReference type="FunFam" id="2.10.25.10:FF:000286">
    <property type="entry name" value="Cadherin EGF LAG seven-pass G-type receptor 3"/>
    <property type="match status" value="1"/>
</dbReference>
<dbReference type="FunFam" id="2.10.25.10:FF:000311">
    <property type="entry name" value="Cadherin EGF LAG seven-pass G-type receptor 3"/>
    <property type="match status" value="1"/>
</dbReference>
<dbReference type="FunFam" id="2.60.120.200:FF:000074">
    <property type="entry name" value="Cadherin EGF LAG seven-pass G-type receptor 3"/>
    <property type="match status" value="1"/>
</dbReference>
<dbReference type="FunFam" id="2.60.120.200:FF:000084">
    <property type="entry name" value="Cadherin EGF LAG seven-pass G-type receptor 3"/>
    <property type="match status" value="1"/>
</dbReference>
<dbReference type="FunFam" id="2.60.40.60:FF:000010">
    <property type="entry name" value="Cadherin EGF LAG seven-pass G-type receptor 3"/>
    <property type="match status" value="2"/>
</dbReference>
<dbReference type="FunFam" id="2.60.40.60:FF:000023">
    <property type="entry name" value="Cadherin EGF LAG seven-pass G-type receptor 3"/>
    <property type="match status" value="2"/>
</dbReference>
<dbReference type="FunFam" id="2.60.40.60:FF:000029">
    <property type="entry name" value="Cadherin EGF LAG seven-pass G-type receptor 3"/>
    <property type="match status" value="1"/>
</dbReference>
<dbReference type="FunFam" id="2.60.40.60:FF:000038">
    <property type="entry name" value="Cadherin EGF LAG seven-pass G-type receptor 3"/>
    <property type="match status" value="1"/>
</dbReference>
<dbReference type="FunFam" id="4.10.1240.10:FF:000010">
    <property type="entry name" value="Cadherin EGF LAG seven-pass G-type receptor 3"/>
    <property type="match status" value="1"/>
</dbReference>
<dbReference type="FunFam" id="2.60.40.60:FF:000040">
    <property type="entry name" value="cadherin EGF LAG seven-pass G-type receptor 3"/>
    <property type="match status" value="1"/>
</dbReference>
<dbReference type="FunFam" id="2.10.25.10:FF:000113">
    <property type="entry name" value="Cadherin, EGF LAG seven-pass G-type receptor 3"/>
    <property type="match status" value="1"/>
</dbReference>
<dbReference type="FunFam" id="2.60.40.60:FF:000044">
    <property type="entry name" value="Cadherin, EGF LAG seven-pass G-type receptor 3"/>
    <property type="match status" value="1"/>
</dbReference>
<dbReference type="Gene3D" id="2.60.120.200">
    <property type="match status" value="2"/>
</dbReference>
<dbReference type="Gene3D" id="2.60.220.50">
    <property type="match status" value="1"/>
</dbReference>
<dbReference type="Gene3D" id="2.60.40.60">
    <property type="entry name" value="Cadherins"/>
    <property type="match status" value="9"/>
</dbReference>
<dbReference type="Gene3D" id="4.10.1240.10">
    <property type="entry name" value="GPCR, family 2, extracellular hormone receptor domain"/>
    <property type="match status" value="1"/>
</dbReference>
<dbReference type="Gene3D" id="2.10.25.10">
    <property type="entry name" value="Laminin"/>
    <property type="match status" value="7"/>
</dbReference>
<dbReference type="Gene3D" id="1.20.1070.10">
    <property type="entry name" value="Rhodopsin 7-helix transmembrane proteins"/>
    <property type="match status" value="1"/>
</dbReference>
<dbReference type="InterPro" id="IPR002126">
    <property type="entry name" value="Cadherin-like_dom"/>
</dbReference>
<dbReference type="InterPro" id="IPR015919">
    <property type="entry name" value="Cadherin-like_sf"/>
</dbReference>
<dbReference type="InterPro" id="IPR056286">
    <property type="entry name" value="Cadherin_CELSR1-3_9th"/>
</dbReference>
<dbReference type="InterPro" id="IPR020894">
    <property type="entry name" value="Cadherin_CS"/>
</dbReference>
<dbReference type="InterPro" id="IPR013320">
    <property type="entry name" value="ConA-like_dom_sf"/>
</dbReference>
<dbReference type="InterPro" id="IPR001881">
    <property type="entry name" value="EGF-like_Ca-bd_dom"/>
</dbReference>
<dbReference type="InterPro" id="IPR000742">
    <property type="entry name" value="EGF-like_dom"/>
</dbReference>
<dbReference type="InterPro" id="IPR057244">
    <property type="entry name" value="GAIN_B"/>
</dbReference>
<dbReference type="InterPro" id="IPR032471">
    <property type="entry name" value="GAIN_dom_N"/>
</dbReference>
<dbReference type="InterPro" id="IPR046338">
    <property type="entry name" value="GAIN_dom_sf"/>
</dbReference>
<dbReference type="InterPro" id="IPR017981">
    <property type="entry name" value="GPCR_2-like_7TM"/>
</dbReference>
<dbReference type="InterPro" id="IPR036445">
    <property type="entry name" value="GPCR_2_extracell_dom_sf"/>
</dbReference>
<dbReference type="InterPro" id="IPR001879">
    <property type="entry name" value="GPCR_2_extracellular_dom"/>
</dbReference>
<dbReference type="InterPro" id="IPR000832">
    <property type="entry name" value="GPCR_2_secretin-like"/>
</dbReference>
<dbReference type="InterPro" id="IPR017983">
    <property type="entry name" value="GPCR_2_secretin-like_CS"/>
</dbReference>
<dbReference type="InterPro" id="IPR000203">
    <property type="entry name" value="GPS"/>
</dbReference>
<dbReference type="InterPro" id="IPR001791">
    <property type="entry name" value="Laminin_G"/>
</dbReference>
<dbReference type="InterPro" id="IPR002049">
    <property type="entry name" value="LE_dom"/>
</dbReference>
<dbReference type="PANTHER" id="PTHR24026:SF38">
    <property type="entry name" value="CADHERIN EGF LAG SEVEN-PASS G-TYPE RECEPTOR 3"/>
    <property type="match status" value="1"/>
</dbReference>
<dbReference type="PANTHER" id="PTHR24026">
    <property type="entry name" value="FAT ATYPICAL CADHERIN-RELATED"/>
    <property type="match status" value="1"/>
</dbReference>
<dbReference type="Pfam" id="PF00002">
    <property type="entry name" value="7tm_2"/>
    <property type="match status" value="1"/>
</dbReference>
<dbReference type="Pfam" id="PF00028">
    <property type="entry name" value="Cadherin"/>
    <property type="match status" value="8"/>
</dbReference>
<dbReference type="Pfam" id="PF23592">
    <property type="entry name" value="Cadherin_CELSR2_9th"/>
    <property type="match status" value="1"/>
</dbReference>
<dbReference type="Pfam" id="PF00008">
    <property type="entry name" value="EGF"/>
    <property type="match status" value="3"/>
</dbReference>
<dbReference type="Pfam" id="PF00053">
    <property type="entry name" value="EGF_laminin"/>
    <property type="match status" value="1"/>
</dbReference>
<dbReference type="Pfam" id="PF16489">
    <property type="entry name" value="GAIN"/>
    <property type="match status" value="1"/>
</dbReference>
<dbReference type="Pfam" id="PF01825">
    <property type="entry name" value="GPS"/>
    <property type="match status" value="1"/>
</dbReference>
<dbReference type="Pfam" id="PF02793">
    <property type="entry name" value="HRM"/>
    <property type="match status" value="1"/>
</dbReference>
<dbReference type="Pfam" id="PF02210">
    <property type="entry name" value="Laminin_G_2"/>
    <property type="match status" value="2"/>
</dbReference>
<dbReference type="PRINTS" id="PR00205">
    <property type="entry name" value="CADHERIN"/>
</dbReference>
<dbReference type="PRINTS" id="PR00249">
    <property type="entry name" value="GPCRSECRETIN"/>
</dbReference>
<dbReference type="SMART" id="SM00112">
    <property type="entry name" value="CA"/>
    <property type="match status" value="9"/>
</dbReference>
<dbReference type="SMART" id="SM00181">
    <property type="entry name" value="EGF"/>
    <property type="match status" value="6"/>
</dbReference>
<dbReference type="SMART" id="SM00179">
    <property type="entry name" value="EGF_CA"/>
    <property type="match status" value="5"/>
</dbReference>
<dbReference type="SMART" id="SM00180">
    <property type="entry name" value="EGF_Lam"/>
    <property type="match status" value="1"/>
</dbReference>
<dbReference type="SMART" id="SM00303">
    <property type="entry name" value="GPS"/>
    <property type="match status" value="1"/>
</dbReference>
<dbReference type="SMART" id="SM00008">
    <property type="entry name" value="HormR"/>
    <property type="match status" value="1"/>
</dbReference>
<dbReference type="SMART" id="SM00282">
    <property type="entry name" value="LamG"/>
    <property type="match status" value="2"/>
</dbReference>
<dbReference type="SUPFAM" id="SSF49313">
    <property type="entry name" value="Cadherin-like"/>
    <property type="match status" value="9"/>
</dbReference>
<dbReference type="SUPFAM" id="SSF49899">
    <property type="entry name" value="Concanavalin A-like lectins/glucanases"/>
    <property type="match status" value="2"/>
</dbReference>
<dbReference type="SUPFAM" id="SSF57196">
    <property type="entry name" value="EGF/Laminin"/>
    <property type="match status" value="4"/>
</dbReference>
<dbReference type="PROSITE" id="PS00010">
    <property type="entry name" value="ASX_HYDROXYL"/>
    <property type="match status" value="1"/>
</dbReference>
<dbReference type="PROSITE" id="PS00232">
    <property type="entry name" value="CADHERIN_1"/>
    <property type="match status" value="7"/>
</dbReference>
<dbReference type="PROSITE" id="PS50268">
    <property type="entry name" value="CADHERIN_2"/>
    <property type="match status" value="8"/>
</dbReference>
<dbReference type="PROSITE" id="PS00022">
    <property type="entry name" value="EGF_1"/>
    <property type="match status" value="5"/>
</dbReference>
<dbReference type="PROSITE" id="PS01186">
    <property type="entry name" value="EGF_2"/>
    <property type="match status" value="4"/>
</dbReference>
<dbReference type="PROSITE" id="PS50026">
    <property type="entry name" value="EGF_3"/>
    <property type="match status" value="6"/>
</dbReference>
<dbReference type="PROSITE" id="PS01248">
    <property type="entry name" value="EGF_LAM_1"/>
    <property type="match status" value="1"/>
</dbReference>
<dbReference type="PROSITE" id="PS50027">
    <property type="entry name" value="EGF_LAM_2"/>
    <property type="match status" value="1"/>
</dbReference>
<dbReference type="PROSITE" id="PS00650">
    <property type="entry name" value="G_PROTEIN_RECEP_F2_2"/>
    <property type="match status" value="1"/>
</dbReference>
<dbReference type="PROSITE" id="PS50227">
    <property type="entry name" value="G_PROTEIN_RECEP_F2_3"/>
    <property type="match status" value="1"/>
</dbReference>
<dbReference type="PROSITE" id="PS50261">
    <property type="entry name" value="G_PROTEIN_RECEP_F2_4"/>
    <property type="match status" value="1"/>
</dbReference>
<dbReference type="PROSITE" id="PS50221">
    <property type="entry name" value="GAIN_B"/>
    <property type="match status" value="1"/>
</dbReference>
<dbReference type="PROSITE" id="PS50025">
    <property type="entry name" value="LAM_G_DOMAIN"/>
    <property type="match status" value="2"/>
</dbReference>
<gene>
    <name type="primary">Celsr3</name>
</gene>
<sequence>MARRPLWWGLPGPSTPVLLLLLLSLFPFSREELGGGGDQDWDPGVATTTGPRAQIGSGAVALCPESPGVWEDGDPGLGVREPVFMRLRVGRQNARNGRGAPEQPNAEVVVQALGSREQEAGQGPGYLLCWHPEISSCGRTGPLRRGSLPLDALSPGDSDLRNSSPHPSELLAQPDGSRPVAFQRNARRSIRKRVETSRCCGKLWEPGHKGQGERSATSTVDRGPFRRDCLPGSLGSGLGEDSAPRAVRTAPTPGSAPRESRTAPGRMRSRGLFRRRFLFERPGPRPPGFPTGPEAKQILSTNQARPRRAANRHPQFPQYNYQTLVPENEAAGTSVLRVVAQDPDPGEAGRLIYSLAALMNSRSLELFSIDPQSGLIRTAAALDRESMERHYLRVTAQDHGSPRLSATTMVAVTVADRNDHAPVFEQAQYRETLRENVEEGYPILQLRATDGDAPPNANLRYRFVGSPAVRTAAAAAFEIDPRSGLISTSGRVDREHMESYELVVEASDQGQEPGPRSATVRVHITVLDENDNAPQFSEKRYVAQVREDVRPHTVVLRVTATDKDKDANGLVHYNIISGNSRGHFAIDSLTGEIQVMAPLDFEAEREYALRIRAQDAGRPPLSNNTGLASIQVVDINDHAPIFVSTPFQVSVLENAPLGHSVIHIQAVDADHGENSRLEYSLTGVASDTPFVINSATGWVSVSGPLDRESVEHYFFGVEARDHGSPPLSASASVTVTVLDVNDNRPEFTMKEYHLRLNEDAAVGTSVVSVTAVDRDANSAISYQITGGNTRNRFAISTQGGVGLVTLALPLDYKQERYFKLVLTASDRALHDHCYVHINITDANTHRPVFQSAHYSVSMNEDRPVGSTVVVISASDDDVGENARITYLLEDNLPQFRIDADSGAITLQAPLDYEDQVTYTLAITARDNGIPQKADTTYVEVMVNDVNDNAPQFVASHYTGLVSEDAPPFTSVLQISATDRDAHANGRVQYTFQNGEDGDGDFTIEPTSGIVRTVRRLDREAVPVYELTAYAVDRGVPPLRTPVSIQVTVQDVNDNAPVFPAEEFEVRVKENSIVGSVVAQITAVDPDDGPNAHIMYQIVEGNIPELFQMDIFSGELTALIDLDYEARQEYVIVVQATSAPLVSRATVHVRLVDQNDNSPVLNNFQILFNNYVSNRSDTFPSGIIGRIPAYDPDVSDHLFYSFERGNELQLLVVNRTSGELRLSRKLDNNRPLVASMLVTVTDGLHSVTAQCVLRVVIITEELLANSLTVRLENMWQERFLSPLLGHFLEGVAAVLATPTEDVFIFNIQNDTDVGGTVLNVSFSALAPRGAGAGAAGPWFSSEELQEQLYVRRAALAARSLLDVLPFDDNVCLREPCENYMKCVSVLRFDSSAPFLASTSTLFRPIQPIAGLRCRCPPGFTGDFCETELDLCYSNPCRNGGACARREGGYTCVCRPRFTDCELDTEAGRCVPGVCRNGGTCTNAPNGGFRCQCPAGGAFEGPRCEVAARSFPPSSFVMFRGLRQRFHLTLSLSFATVQPSGLLFYNGRLNEKHDFLALELVAGQVRLTYSTGESNTVVSPTVPGGLSDGQWHTVHLRYYNKPRTDALGGAQGPSKDKVAVLSVDDCNVAVALQFGAEIGNYSCAAAGVQTSSKKSLDLTGPLLLGGVPNLPENFPVSHKDFIGCMRDLHIDGRRMDMAAFVANNGTMAGCQAKSHFCASGPCKNNGFCSERWGGFSCDCPVGFGGKDCRLTMAHPYHFQGNGTLSWDFGNDMAVSVPWYLGLSFRTRATKGILMQVQLGPHSVLLCKLDRGLLSVTLNRASGHTVHLLLDQMTVSDGRWHDLRLELQEEPGGRRGHHIFMVSLDFTLFQDTMAMGGELQGLKVKQLHVGGLPPSSKEEGHQGLVGCIQGVWIGFTPFGSSALLPPSHRVNVEPGCTVTNPCASGPCPPHADCKDLWQTFSCTCRPGYYGPGCVDACLLNPCQNQGSCRHLQGAPHGYTCDCVSGYFGQHCEHRVDQQCPRGWWGSPTCGPCNCDVHKGFDPNCNKTNGQCHCKEFHYRPRGSDSCLPCDCYPVGSTSRSCAPHSGQCPCRPGALGRQCNSCDSPFAEVTASGCRVLYDACPKSLRSGVWWPQTKFGVLATVPCPRGALGAAVRLCDEDQGWLEPDLFNCTSPAFRELSLLLDGLELNKTALDTVEAKKLAQRLREVTGQTDHYFSQDVRVTARLLAYLLAFESHQQGFGLTATQDAHFNENLLWAGSALLAPETGHLWAALGQRAPGGSPGSAGLVQHLEEYAATLARNMELTYLNPVGLVTPNIMLSIDRMEHPSSTQGARRYPRYHSNLFRGQDAWDPHTHVLLPSQASQPSPSEVLPTSSNAENATASSVVSPPAPLEPESEPGISIVILLVYRALGGLLPAQFQAERRGARLPQNPVMNSPVVSVAVFHGRNFLRGVLVSPINLEFRLLQTANRSKAICVQWDPPGPTDQHGMWTARDCELVHRNGSHARCRCSRTGTFGVLMDASPRERLEGDLELLAVFTHVVVAVSVTALVLTAAVLLSLRSLKSNVRGIHANVAAALGVAELLFLLGIHRTHNQLLCTAVAILLHYFFLSTFAWLLVQGLHLYRMQVEPRNVDRGAMRFYHALGWGVPAVLLGLAVGLDPEGYGNPDFCWISIHEPLIWSFAGPIVLVIVMNGTMFLLAARTSCSTGQREAKKTSVLTLRSSFLLLLLVSASWLFGLLAVNHSILAFHYLHAGLCGLQGLAVLLLFCVLNADARAAWTPACLGKKAAPEETRPAPGPGSGAYNNTALFEESGLIRITLGASTVSSVSSARSGRAQDQDSQRGRSYLRDNVLVRHGSTAEHTERSLQAHAGPTDLDVAMFHRDAGADSDSDSDLSLEEERSLSIPSSESEDNGRTRGRFQRPLRRAAQSERLLAHPKDVDGNDLLSYWPALGECEAAPCALQAWGSERRLGLDSNKDAANNNQPELALTSGDETSLGRAQRQRKGILKNRLQYPLVPQSRGTPELSWCRAATLGHRAVPAASYGRIYAGGGTGSLSQPASRYSSREQLDLLLRRQLSKERLEEVPVPAPVLHPLSRPGSQERLDTAPARLEARDRGSTLPRRQPPRDYPGTMAGRFGSRDALDLGAPREWLSTLPPPRRNRDLDPQHPPLPLSPQRQLSRDPLLPSRPLDSLSRISNSREGLDQVPSRHPSREALGPAPQLLRAREDPASGPSHGPSTEQLDILSSILASFNSSALSSVQSSSTPSGPHTTATASALGPSTPRSATSHSISELSPDSEVPRSEGHS</sequence>
<accession>Q91ZI0</accession>
<accession>E9QLD7</accession>
<accession>Q9ESD0</accession>
<protein>
    <recommendedName>
        <fullName>Cadherin EGF LAG seven-pass G-type receptor 3</fullName>
    </recommendedName>
</protein>
<reference key="1">
    <citation type="journal article" date="2002" name="Mech. Dev.">
        <title>Developmental expression profiles of Celsr (Flamingo) genes in the mouse.</title>
        <authorList>
            <person name="Tissir F."/>
            <person name="De-Backer O."/>
            <person name="Goffinet A.M."/>
            <person name="Lambert de Rouvroit C.A."/>
        </authorList>
    </citation>
    <scope>NUCLEOTIDE SEQUENCE [MRNA]</scope>
    <scope>DEVELOPMENTAL STAGE</scope>
    <source>
        <strain>C57BL/6J</strain>
    </source>
</reference>
<reference key="2">
    <citation type="journal article" date="2009" name="PLoS Biol.">
        <title>Lineage-specific biology revealed by a finished genome assembly of the mouse.</title>
        <authorList>
            <person name="Church D.M."/>
            <person name="Goodstadt L."/>
            <person name="Hillier L.W."/>
            <person name="Zody M.C."/>
            <person name="Goldstein S."/>
            <person name="She X."/>
            <person name="Bult C.J."/>
            <person name="Agarwala R."/>
            <person name="Cherry J.L."/>
            <person name="DiCuccio M."/>
            <person name="Hlavina W."/>
            <person name="Kapustin Y."/>
            <person name="Meric P."/>
            <person name="Maglott D."/>
            <person name="Birtle Z."/>
            <person name="Marques A.C."/>
            <person name="Graves T."/>
            <person name="Zhou S."/>
            <person name="Teague B."/>
            <person name="Potamousis K."/>
            <person name="Churas C."/>
            <person name="Place M."/>
            <person name="Herschleb J."/>
            <person name="Runnheim R."/>
            <person name="Forrest D."/>
            <person name="Amos-Landgraf J."/>
            <person name="Schwartz D.C."/>
            <person name="Cheng Z."/>
            <person name="Lindblad-Toh K."/>
            <person name="Eichler E.E."/>
            <person name="Ponting C.P."/>
        </authorList>
    </citation>
    <scope>NUCLEOTIDE SEQUENCE [LARGE SCALE GENOMIC DNA]</scope>
    <source>
        <strain>C57BL/6J</strain>
    </source>
</reference>
<reference key="3">
    <citation type="journal article" date="2001" name="Mech. Dev.">
        <title>The flamingo-related mouse Celsr family (Celsr1-3) genes exhibit distinct patterns of expression during embryonic development.</title>
        <authorList>
            <person name="Formstone C.J."/>
            <person name="Little P.F.R."/>
        </authorList>
    </citation>
    <scope>NUCLEOTIDE SEQUENCE [MRNA] OF 2574-3046</scope>
    <scope>DEVELOPMENTAL STAGE</scope>
</reference>
<reference key="4">
    <citation type="journal article" date="2000" name="Mamm. Genome">
        <title>Chromosomal localization of Celsr2 and Celsr3 in the mouse; Celsr3 is a candidate for the tippy (tip) lethal mutant on chromosome 9.</title>
        <authorList>
            <person name="Formstone C.J."/>
            <person name="Barclay J."/>
            <person name="Rees M."/>
            <person name="Little P.F.R."/>
        </authorList>
    </citation>
    <scope>TISSUE SPECIFICITY</scope>
</reference>
<organism>
    <name type="scientific">Mus musculus</name>
    <name type="common">Mouse</name>
    <dbReference type="NCBI Taxonomy" id="10090"/>
    <lineage>
        <taxon>Eukaryota</taxon>
        <taxon>Metazoa</taxon>
        <taxon>Chordata</taxon>
        <taxon>Craniata</taxon>
        <taxon>Vertebrata</taxon>
        <taxon>Euteleostomi</taxon>
        <taxon>Mammalia</taxon>
        <taxon>Eutheria</taxon>
        <taxon>Euarchontoglires</taxon>
        <taxon>Glires</taxon>
        <taxon>Rodentia</taxon>
        <taxon>Myomorpha</taxon>
        <taxon>Muroidea</taxon>
        <taxon>Muridae</taxon>
        <taxon>Murinae</taxon>
        <taxon>Mus</taxon>
        <taxon>Mus</taxon>
    </lineage>
</organism>
<name>CELR3_MOUSE</name>
<evidence type="ECO:0000250" key="1"/>
<evidence type="ECO:0000250" key="2">
    <source>
        <dbReference type="UniProtKB" id="O88278"/>
    </source>
</evidence>
<evidence type="ECO:0000255" key="3"/>
<evidence type="ECO:0000255" key="4">
    <source>
        <dbReference type="PROSITE-ProRule" id="PRU00043"/>
    </source>
</evidence>
<evidence type="ECO:0000255" key="5">
    <source>
        <dbReference type="PROSITE-ProRule" id="PRU00076"/>
    </source>
</evidence>
<evidence type="ECO:0000255" key="6">
    <source>
        <dbReference type="PROSITE-ProRule" id="PRU00098"/>
    </source>
</evidence>
<evidence type="ECO:0000255" key="7">
    <source>
        <dbReference type="PROSITE-ProRule" id="PRU00122"/>
    </source>
</evidence>
<evidence type="ECO:0000255" key="8">
    <source>
        <dbReference type="PROSITE-ProRule" id="PRU00460"/>
    </source>
</evidence>
<evidence type="ECO:0000256" key="9">
    <source>
        <dbReference type="SAM" id="MobiDB-lite"/>
    </source>
</evidence>
<evidence type="ECO:0000269" key="10">
    <source>
    </source>
</evidence>
<evidence type="ECO:0000269" key="11">
    <source>
    </source>
</evidence>
<evidence type="ECO:0000269" key="12">
    <source>
    </source>
</evidence>
<evidence type="ECO:0000305" key="13"/>
<keyword id="KW-0106">Calcium</keyword>
<keyword id="KW-1003">Cell membrane</keyword>
<keyword id="KW-0217">Developmental protein</keyword>
<keyword id="KW-1015">Disulfide bond</keyword>
<keyword id="KW-0245">EGF-like domain</keyword>
<keyword id="KW-0297">G-protein coupled receptor</keyword>
<keyword id="KW-0325">Glycoprotein</keyword>
<keyword id="KW-0379">Hydroxylation</keyword>
<keyword id="KW-0424">Laminin EGF-like domain</keyword>
<keyword id="KW-0472">Membrane</keyword>
<keyword id="KW-0597">Phosphoprotein</keyword>
<keyword id="KW-0675">Receptor</keyword>
<keyword id="KW-1185">Reference proteome</keyword>
<keyword id="KW-0677">Repeat</keyword>
<keyword id="KW-0732">Signal</keyword>
<keyword id="KW-0807">Transducer</keyword>
<keyword id="KW-0812">Transmembrane</keyword>
<keyword id="KW-1133">Transmembrane helix</keyword>